<sequence length="427" mass="48025">MSWFDTTLSRLKGLFSRPVTRSTTGLDVPLDAHGRPQDVVTETVSTSGPLKPGHLRQVRRDARLLPKGVRRYTPGRKKWMEAAEARRLFSATLRTRNRNLRDLLPDEAQLARYGLPVWRTEEDVAAALGVSVGVLRHYSIHRPRERVRHYVTFAVPKRSGGVRLLHAPKRRLKALQRRMLALLVSKLPVSPQAHGFVPGRSIKTGAAPHVGRRVVLKLDLKDFFPSVTFARVRGLLIALGYGYPVAATLAVLMTESERQPVELEGILFHVPVGPRVCVQGAPTSPALCNAVLLRLDRRLAGLARRYGYTYTRYADDLTFSGDDVTALERVRALAARYVQEEGFEVNREKTRVQRRGGAQRVTGVTVNTTLGLSREERPRLRAMLHQEARSEDVEAHRAHLDGLLAYVKMLNPEQAERLARRRKPRGT</sequence>
<reference key="1">
    <citation type="journal article" date="1990" name="Proc. Natl. Acad. Sci. U.S.A.">
        <title>Two independent retrons with highly diverse reverse transcriptases in Myxococcus xanthus.</title>
        <authorList>
            <person name="Inouye S."/>
            <person name="Herzer P.J."/>
            <person name="Inouye M."/>
        </authorList>
    </citation>
    <scope>NUCLEOTIDE SEQUENCE [GENOMIC DNA]</scope>
    <source>
        <strain>DZF9</strain>
    </source>
</reference>
<protein>
    <recommendedName>
        <fullName evidence="5">Retron Mx65 reverse transcriptase</fullName>
        <shortName>Mx65-RT</shortName>
        <ecNumber evidence="3">2.7.7.49</ecNumber>
    </recommendedName>
    <alternativeName>
        <fullName>RNA-directed DNA polymerase from retron Mx65</fullName>
    </alternativeName>
</protein>
<accession>P23071</accession>
<name>RT65_MYXXA</name>
<dbReference type="EC" id="2.7.7.49" evidence="3"/>
<dbReference type="EMBL" id="M30609">
    <property type="protein sequence ID" value="AAA88323.1"/>
    <property type="molecule type" value="Genomic_DNA"/>
</dbReference>
<dbReference type="PIR" id="A34864">
    <property type="entry name" value="RRYC65"/>
</dbReference>
<dbReference type="SMR" id="P23071"/>
<dbReference type="GO" id="GO:0046872">
    <property type="term" value="F:metal ion binding"/>
    <property type="evidence" value="ECO:0007669"/>
    <property type="project" value="UniProtKB-KW"/>
</dbReference>
<dbReference type="GO" id="GO:0003723">
    <property type="term" value="F:RNA binding"/>
    <property type="evidence" value="ECO:0007669"/>
    <property type="project" value="InterPro"/>
</dbReference>
<dbReference type="GO" id="GO:0003964">
    <property type="term" value="F:RNA-directed DNA polymerase activity"/>
    <property type="evidence" value="ECO:0007669"/>
    <property type="project" value="UniProtKB-KW"/>
</dbReference>
<dbReference type="GO" id="GO:0051607">
    <property type="term" value="P:defense response to virus"/>
    <property type="evidence" value="ECO:0007669"/>
    <property type="project" value="UniProtKB-KW"/>
</dbReference>
<dbReference type="CDD" id="cd03487">
    <property type="entry name" value="RT_Bac_retron_II"/>
    <property type="match status" value="1"/>
</dbReference>
<dbReference type="InterPro" id="IPR043502">
    <property type="entry name" value="DNA/RNA_pol_sf"/>
</dbReference>
<dbReference type="InterPro" id="IPR051083">
    <property type="entry name" value="GrpII_Intron_Splice-Mob/Def"/>
</dbReference>
<dbReference type="InterPro" id="IPR000123">
    <property type="entry name" value="Reverse_transcriptase_msDNA"/>
</dbReference>
<dbReference type="InterPro" id="IPR000477">
    <property type="entry name" value="RT_dom"/>
</dbReference>
<dbReference type="PANTHER" id="PTHR34047">
    <property type="entry name" value="NUCLEAR INTRON MATURASE 1, MITOCHONDRIAL-RELATED"/>
    <property type="match status" value="1"/>
</dbReference>
<dbReference type="PANTHER" id="PTHR34047:SF7">
    <property type="entry name" value="RNA-DIRECTED DNA POLYMERASE"/>
    <property type="match status" value="1"/>
</dbReference>
<dbReference type="Pfam" id="PF00078">
    <property type="entry name" value="RVT_1"/>
    <property type="match status" value="1"/>
</dbReference>
<dbReference type="PRINTS" id="PR00866">
    <property type="entry name" value="RNADNAPOLMS"/>
</dbReference>
<dbReference type="SUPFAM" id="SSF56672">
    <property type="entry name" value="DNA/RNA polymerases"/>
    <property type="match status" value="1"/>
</dbReference>
<dbReference type="PROSITE" id="PS50878">
    <property type="entry name" value="RT_POL"/>
    <property type="match status" value="1"/>
</dbReference>
<keyword id="KW-0051">Antiviral defense</keyword>
<keyword id="KW-0460">Magnesium</keyword>
<keyword id="KW-0479">Metal-binding</keyword>
<keyword id="KW-0548">Nucleotidyltransferase</keyword>
<keyword id="KW-0695">RNA-directed DNA polymerase</keyword>
<keyword id="KW-0808">Transferase</keyword>
<keyword id="KW-0814">Transposable element</keyword>
<feature type="chain" id="PRO_0000097507" description="Retron Mx65 reverse transcriptase">
    <location>
        <begin position="1"/>
        <end position="427"/>
    </location>
</feature>
<feature type="domain" description="Reverse transcriptase" evidence="3">
    <location>
        <begin position="136"/>
        <end position="366"/>
    </location>
</feature>
<feature type="binding site" evidence="3">
    <location>
        <position position="219"/>
    </location>
    <ligand>
        <name>Mg(2+)</name>
        <dbReference type="ChEBI" id="CHEBI:18420"/>
        <note>catalytic</note>
    </ligand>
</feature>
<feature type="binding site" evidence="3">
    <location>
        <position position="315"/>
    </location>
    <ligand>
        <name>Mg(2+)</name>
        <dbReference type="ChEBI" id="CHEBI:18420"/>
        <note>catalytic</note>
    </ligand>
</feature>
<feature type="binding site" evidence="3">
    <location>
        <position position="316"/>
    </location>
    <ligand>
        <name>Mg(2+)</name>
        <dbReference type="ChEBI" id="CHEBI:18420"/>
        <note>catalytic</note>
    </ligand>
</feature>
<evidence type="ECO:0000250" key="1">
    <source>
        <dbReference type="UniProtKB" id="P23072"/>
    </source>
</evidence>
<evidence type="ECO:0000250" key="2">
    <source>
        <dbReference type="UniProtKB" id="P71276"/>
    </source>
</evidence>
<evidence type="ECO:0000255" key="3">
    <source>
        <dbReference type="PROSITE-ProRule" id="PRU00405"/>
    </source>
</evidence>
<evidence type="ECO:0000269" key="4">
    <source>
    </source>
</evidence>
<evidence type="ECO:0000305" key="5"/>
<comment type="function">
    <text evidence="1 2">Reverse transcriptase (RT) responsible for synthesis of msDNA-Mx65 (a branched molecule with RNA linked by a 2',5'-phosphodiester bond to ssDNA). The retron transcript serves as primer (from a conserved internal G residue) and template for the reaction, and codes for the RT (By similarity). The retron is involved in antiviral defense (By similarity).</text>
</comment>
<comment type="catalytic activity">
    <reaction evidence="3">
        <text>DNA(n) + a 2'-deoxyribonucleoside 5'-triphosphate = DNA(n+1) + diphosphate</text>
        <dbReference type="Rhea" id="RHEA:22508"/>
        <dbReference type="Rhea" id="RHEA-COMP:17339"/>
        <dbReference type="Rhea" id="RHEA-COMP:17340"/>
        <dbReference type="ChEBI" id="CHEBI:33019"/>
        <dbReference type="ChEBI" id="CHEBI:61560"/>
        <dbReference type="ChEBI" id="CHEBI:173112"/>
        <dbReference type="EC" id="2.7.7.49"/>
    </reaction>
</comment>
<comment type="miscellaneous">
    <text evidence="4">M.xanthus contains two independent and unlinked retrons: Mx65 and Mx162.</text>
</comment>
<comment type="miscellaneous">
    <text>Retrons may be the ancestors of retrovirus.</text>
</comment>
<comment type="similarity">
    <text evidence="5">Belongs to the bacterial reverse transcriptase family.</text>
</comment>
<organism>
    <name type="scientific">Myxococcus xanthus</name>
    <dbReference type="NCBI Taxonomy" id="34"/>
    <lineage>
        <taxon>Bacteria</taxon>
        <taxon>Pseudomonadati</taxon>
        <taxon>Myxococcota</taxon>
        <taxon>Myxococcia</taxon>
        <taxon>Myxococcales</taxon>
        <taxon>Cystobacterineae</taxon>
        <taxon>Myxococcaceae</taxon>
        <taxon>Myxococcus</taxon>
    </lineage>
</organism>
<proteinExistence type="inferred from homology"/>